<comment type="catalytic activity">
    <reaction evidence="1">
        <text>tRNA(Leu) + L-leucine + ATP = L-leucyl-tRNA(Leu) + AMP + diphosphate</text>
        <dbReference type="Rhea" id="RHEA:11688"/>
        <dbReference type="Rhea" id="RHEA-COMP:9613"/>
        <dbReference type="Rhea" id="RHEA-COMP:9622"/>
        <dbReference type="ChEBI" id="CHEBI:30616"/>
        <dbReference type="ChEBI" id="CHEBI:33019"/>
        <dbReference type="ChEBI" id="CHEBI:57427"/>
        <dbReference type="ChEBI" id="CHEBI:78442"/>
        <dbReference type="ChEBI" id="CHEBI:78494"/>
        <dbReference type="ChEBI" id="CHEBI:456215"/>
        <dbReference type="EC" id="6.1.1.4"/>
    </reaction>
</comment>
<comment type="subcellular location">
    <subcellularLocation>
        <location evidence="1">Cytoplasm</location>
    </subcellularLocation>
</comment>
<comment type="similarity">
    <text evidence="1">Belongs to the class-I aminoacyl-tRNA synthetase family.</text>
</comment>
<organism>
    <name type="scientific">Laribacter hongkongensis (strain HLHK9)</name>
    <dbReference type="NCBI Taxonomy" id="557598"/>
    <lineage>
        <taxon>Bacteria</taxon>
        <taxon>Pseudomonadati</taxon>
        <taxon>Pseudomonadota</taxon>
        <taxon>Betaproteobacteria</taxon>
        <taxon>Neisseriales</taxon>
        <taxon>Aquaspirillaceae</taxon>
        <taxon>Laribacter</taxon>
    </lineage>
</organism>
<gene>
    <name evidence="1" type="primary">leuS</name>
    <name type="ordered locus">LHK_00119</name>
</gene>
<sequence length="866" mass="96345">MHEQYQPRDIEVAAQQKWEKTAAFKAVEDASRPKYYCLSMFPYPSGKLHMGHVRNYTIGDVLSRYMALKGYNVLQPMGWDAFGMPAENAALKNQVAPAAWTYSNIEYMKTQLKSLGFAIDWEREVTTCKPDYYRWEQWLFTRLFEKGVIYRKNGVVNWDPVDQTVLANEQVIDGRGWRSGALVEKREIPMYYFGITQYADELLADLDTLDWPPQVATMQRNWIGKSFGADVRFAYDEASIGSAGELTVYTTRPDTLMGATYVAVAAEHPLATQAAANDPALQAFIAKCKAGSVAEADMATMEKEGMPTGLFVVHPLTGAKLPVWVANYVLMSYGSGAVMAVPAHDERDFAFANKYALPIQQVIALKEGDATFDASTWQDWYATKDDSTRLVNSGKYDGLDFQGAFDAIVADLAAKAAGEKKTQYRLRDWGISRQRYWGCPIPIIHCDSCGDVPVPADQLPVVLPENVVPDGSGNPLAKMPEFYETTCPCCGKPARRETDTMDTFVESSWYFARYASPDCATGMVDDRARYWLNVDQYIGGIEHAILHLLYARFFNKLMRDEGLLANDEPFQRLLTQGMVVCETFYRDLDNGSKEWITPADVVIERDGKGKIIAATHKADGLPVVVGGIEKMSKSKNNGVDPQALIEQYGADTARLFMMFAAPPSQSLEWSDAGVEGAYRFLKRLYKIVSEYVAGGVAERFVAGELTADEKALRLKLHTTIQKVSDDFGVRQQFNTAIAAVMELLNLFDRTEASRAVRQEVLESVVVLLSPIVPHICETLWSALKPGSELLAQRWPEVDPAALVQDEIELVVQVNGKLRGSVRVAADAGRDVIEAAALAHEQVRKFMDGQPAKKVIVVPGRLVNIVV</sequence>
<proteinExistence type="inferred from homology"/>
<feature type="chain" id="PRO_1000199211" description="Leucine--tRNA ligase">
    <location>
        <begin position="1"/>
        <end position="866"/>
    </location>
</feature>
<feature type="short sequence motif" description="'HIGH' region">
    <location>
        <begin position="42"/>
        <end position="52"/>
    </location>
</feature>
<feature type="short sequence motif" description="'KMSKS' region">
    <location>
        <begin position="630"/>
        <end position="634"/>
    </location>
</feature>
<feature type="binding site" evidence="1">
    <location>
        <position position="633"/>
    </location>
    <ligand>
        <name>ATP</name>
        <dbReference type="ChEBI" id="CHEBI:30616"/>
    </ligand>
</feature>
<keyword id="KW-0030">Aminoacyl-tRNA synthetase</keyword>
<keyword id="KW-0067">ATP-binding</keyword>
<keyword id="KW-0963">Cytoplasm</keyword>
<keyword id="KW-0436">Ligase</keyword>
<keyword id="KW-0547">Nucleotide-binding</keyword>
<keyword id="KW-0648">Protein biosynthesis</keyword>
<keyword id="KW-1185">Reference proteome</keyword>
<evidence type="ECO:0000255" key="1">
    <source>
        <dbReference type="HAMAP-Rule" id="MF_00049"/>
    </source>
</evidence>
<reference key="1">
    <citation type="journal article" date="2009" name="PLoS Genet.">
        <title>The complete genome and proteome of Laribacter hongkongensis reveal potential mechanisms for adaptations to different temperatures and habitats.</title>
        <authorList>
            <person name="Woo P.C.Y."/>
            <person name="Lau S.K.P."/>
            <person name="Tse H."/>
            <person name="Teng J.L.L."/>
            <person name="Curreem S.O."/>
            <person name="Tsang A.K.L."/>
            <person name="Fan R.Y.Y."/>
            <person name="Wong G.K.M."/>
            <person name="Huang Y."/>
            <person name="Loman N.J."/>
            <person name="Snyder L.A.S."/>
            <person name="Cai J.J."/>
            <person name="Huang J.-D."/>
            <person name="Mak W."/>
            <person name="Pallen M.J."/>
            <person name="Lok S."/>
            <person name="Yuen K.-Y."/>
        </authorList>
    </citation>
    <scope>NUCLEOTIDE SEQUENCE [LARGE SCALE GENOMIC DNA]</scope>
    <source>
        <strain>HLHK9</strain>
    </source>
</reference>
<protein>
    <recommendedName>
        <fullName evidence="1">Leucine--tRNA ligase</fullName>
        <ecNumber evidence="1">6.1.1.4</ecNumber>
    </recommendedName>
    <alternativeName>
        <fullName evidence="1">Leucyl-tRNA synthetase</fullName>
        <shortName evidence="1">LeuRS</shortName>
    </alternativeName>
</protein>
<accession>C1DA02</accession>
<name>SYL_LARHH</name>
<dbReference type="EC" id="6.1.1.4" evidence="1"/>
<dbReference type="EMBL" id="CP001154">
    <property type="protein sequence ID" value="ACO73115.1"/>
    <property type="molecule type" value="Genomic_DNA"/>
</dbReference>
<dbReference type="RefSeq" id="WP_012695610.1">
    <property type="nucleotide sequence ID" value="NC_012559.1"/>
</dbReference>
<dbReference type="SMR" id="C1DA02"/>
<dbReference type="STRING" id="557598.LHK_00119"/>
<dbReference type="KEGG" id="lhk:LHK_00119"/>
<dbReference type="eggNOG" id="COG0495">
    <property type="taxonomic scope" value="Bacteria"/>
</dbReference>
<dbReference type="HOGENOM" id="CLU_004427_0_0_4"/>
<dbReference type="Proteomes" id="UP000002010">
    <property type="component" value="Chromosome"/>
</dbReference>
<dbReference type="GO" id="GO:0005829">
    <property type="term" value="C:cytosol"/>
    <property type="evidence" value="ECO:0007669"/>
    <property type="project" value="TreeGrafter"/>
</dbReference>
<dbReference type="GO" id="GO:0002161">
    <property type="term" value="F:aminoacyl-tRNA deacylase activity"/>
    <property type="evidence" value="ECO:0007669"/>
    <property type="project" value="InterPro"/>
</dbReference>
<dbReference type="GO" id="GO:0005524">
    <property type="term" value="F:ATP binding"/>
    <property type="evidence" value="ECO:0007669"/>
    <property type="project" value="UniProtKB-UniRule"/>
</dbReference>
<dbReference type="GO" id="GO:0004823">
    <property type="term" value="F:leucine-tRNA ligase activity"/>
    <property type="evidence" value="ECO:0007669"/>
    <property type="project" value="UniProtKB-UniRule"/>
</dbReference>
<dbReference type="GO" id="GO:0006429">
    <property type="term" value="P:leucyl-tRNA aminoacylation"/>
    <property type="evidence" value="ECO:0007669"/>
    <property type="project" value="UniProtKB-UniRule"/>
</dbReference>
<dbReference type="CDD" id="cd07958">
    <property type="entry name" value="Anticodon_Ia_Leu_BEm"/>
    <property type="match status" value="1"/>
</dbReference>
<dbReference type="CDD" id="cd00812">
    <property type="entry name" value="LeuRS_core"/>
    <property type="match status" value="1"/>
</dbReference>
<dbReference type="FunFam" id="2.20.28.290:FF:000001">
    <property type="entry name" value="Leucine--tRNA ligase"/>
    <property type="match status" value="1"/>
</dbReference>
<dbReference type="FunFam" id="3.10.20.590:FF:000001">
    <property type="entry name" value="Leucine--tRNA ligase"/>
    <property type="match status" value="1"/>
</dbReference>
<dbReference type="FunFam" id="3.40.50.620:FF:000003">
    <property type="entry name" value="Leucine--tRNA ligase"/>
    <property type="match status" value="1"/>
</dbReference>
<dbReference type="FunFam" id="3.40.50.620:FF:000124">
    <property type="entry name" value="Leucine--tRNA ligase"/>
    <property type="match status" value="1"/>
</dbReference>
<dbReference type="FunFam" id="3.90.740.10:FF:000012">
    <property type="entry name" value="Leucine--tRNA ligase"/>
    <property type="match status" value="1"/>
</dbReference>
<dbReference type="FunFam" id="1.10.730.10:FF:000011">
    <property type="entry name" value="Leucine--tRNA ligase chloroplastic/mitochondrial"/>
    <property type="match status" value="1"/>
</dbReference>
<dbReference type="Gene3D" id="2.20.28.290">
    <property type="match status" value="1"/>
</dbReference>
<dbReference type="Gene3D" id="3.10.20.590">
    <property type="match status" value="1"/>
</dbReference>
<dbReference type="Gene3D" id="3.40.50.620">
    <property type="entry name" value="HUPs"/>
    <property type="match status" value="2"/>
</dbReference>
<dbReference type="Gene3D" id="1.10.730.10">
    <property type="entry name" value="Isoleucyl-tRNA Synthetase, Domain 1"/>
    <property type="match status" value="2"/>
</dbReference>
<dbReference type="Gene3D" id="3.90.740.10">
    <property type="entry name" value="Valyl/Leucyl/Isoleucyl-tRNA synthetase, editing domain"/>
    <property type="match status" value="1"/>
</dbReference>
<dbReference type="HAMAP" id="MF_00049_B">
    <property type="entry name" value="Leu_tRNA_synth_B"/>
    <property type="match status" value="1"/>
</dbReference>
<dbReference type="InterPro" id="IPR001412">
    <property type="entry name" value="aa-tRNA-synth_I_CS"/>
</dbReference>
<dbReference type="InterPro" id="IPR002300">
    <property type="entry name" value="aa-tRNA-synth_Ia"/>
</dbReference>
<dbReference type="InterPro" id="IPR002302">
    <property type="entry name" value="Leu-tRNA-ligase"/>
</dbReference>
<dbReference type="InterPro" id="IPR025709">
    <property type="entry name" value="Leu_tRNA-synth_edit"/>
</dbReference>
<dbReference type="InterPro" id="IPR013155">
    <property type="entry name" value="M/V/L/I-tRNA-synth_anticd-bd"/>
</dbReference>
<dbReference type="InterPro" id="IPR014729">
    <property type="entry name" value="Rossmann-like_a/b/a_fold"/>
</dbReference>
<dbReference type="InterPro" id="IPR009080">
    <property type="entry name" value="tRNAsynth_Ia_anticodon-bd"/>
</dbReference>
<dbReference type="InterPro" id="IPR009008">
    <property type="entry name" value="Val/Leu/Ile-tRNA-synth_edit"/>
</dbReference>
<dbReference type="NCBIfam" id="TIGR00396">
    <property type="entry name" value="leuS_bact"/>
    <property type="match status" value="1"/>
</dbReference>
<dbReference type="PANTHER" id="PTHR43740:SF2">
    <property type="entry name" value="LEUCINE--TRNA LIGASE, MITOCHONDRIAL"/>
    <property type="match status" value="1"/>
</dbReference>
<dbReference type="PANTHER" id="PTHR43740">
    <property type="entry name" value="LEUCYL-TRNA SYNTHETASE"/>
    <property type="match status" value="1"/>
</dbReference>
<dbReference type="Pfam" id="PF08264">
    <property type="entry name" value="Anticodon_1"/>
    <property type="match status" value="1"/>
</dbReference>
<dbReference type="Pfam" id="PF00133">
    <property type="entry name" value="tRNA-synt_1"/>
    <property type="match status" value="3"/>
</dbReference>
<dbReference type="Pfam" id="PF13603">
    <property type="entry name" value="tRNA-synt_1_2"/>
    <property type="match status" value="1"/>
</dbReference>
<dbReference type="PRINTS" id="PR00985">
    <property type="entry name" value="TRNASYNTHLEU"/>
</dbReference>
<dbReference type="SUPFAM" id="SSF47323">
    <property type="entry name" value="Anticodon-binding domain of a subclass of class I aminoacyl-tRNA synthetases"/>
    <property type="match status" value="1"/>
</dbReference>
<dbReference type="SUPFAM" id="SSF52374">
    <property type="entry name" value="Nucleotidylyl transferase"/>
    <property type="match status" value="1"/>
</dbReference>
<dbReference type="SUPFAM" id="SSF50677">
    <property type="entry name" value="ValRS/IleRS/LeuRS editing domain"/>
    <property type="match status" value="1"/>
</dbReference>
<dbReference type="PROSITE" id="PS00178">
    <property type="entry name" value="AA_TRNA_LIGASE_I"/>
    <property type="match status" value="1"/>
</dbReference>